<proteinExistence type="evidence at protein level"/>
<keyword id="KW-0119">Carbohydrate metabolism</keyword>
<keyword id="KW-0136">Cellulose degradation</keyword>
<keyword id="KW-0903">Direct protein sequencing</keyword>
<keyword id="KW-0326">Glycosidase</keyword>
<keyword id="KW-0378">Hydrolase</keyword>
<keyword id="KW-0624">Polysaccharide degradation</keyword>
<keyword id="KW-0732">Signal</keyword>
<organism>
    <name type="scientific">Pectobacterium parmentieri</name>
    <dbReference type="NCBI Taxonomy" id="1905730"/>
    <lineage>
        <taxon>Bacteria</taxon>
        <taxon>Pseudomonadati</taxon>
        <taxon>Pseudomonadota</taxon>
        <taxon>Gammaproteobacteria</taxon>
        <taxon>Enterobacterales</taxon>
        <taxon>Pectobacteriaceae</taxon>
        <taxon>Pectobacterium</taxon>
    </lineage>
</organism>
<accession>P16630</accession>
<accession>K4FJ91</accession>
<reference key="1">
    <citation type="journal article" date="1990" name="Gene">
        <title>CelS: a novel endoglucanase identified from Erwinia carotovora subsp. carotovora.</title>
        <authorList>
            <person name="Saarilahti H.T."/>
            <person name="Henrissat B."/>
            <person name="Palva E.T."/>
        </authorList>
    </citation>
    <scope>NUCLEOTIDE SEQUENCE [GENOMIC DNA]</scope>
    <scope>PARTIAL PROTEIN SEQUENCE</scope>
    <source>
        <strain>SCC3193</strain>
    </source>
</reference>
<reference key="2">
    <citation type="journal article" date="2012" name="J. Bacteriol.">
        <title>Genome sequence of Pectobacterium sp. strain SCC3193.</title>
        <authorList>
            <person name="Koskinen J.P."/>
            <person name="Laine P."/>
            <person name="Niemi O."/>
            <person name="Nykyri J."/>
            <person name="Harjunpaa H."/>
            <person name="Auvinen P."/>
            <person name="Paulin L."/>
            <person name="Pirhonen M."/>
            <person name="Palva T."/>
            <person name="Holm L."/>
        </authorList>
    </citation>
    <scope>NUCLEOTIDE SEQUENCE [LARGE SCALE GENOMIC DNA]</scope>
    <source>
        <strain>SCC3193</strain>
    </source>
</reference>
<name>GUNS_PECPM</name>
<dbReference type="EC" id="3.2.1.4"/>
<dbReference type="EMBL" id="M32399">
    <property type="protein sequence ID" value="AAA24817.1"/>
    <property type="molecule type" value="Genomic_DNA"/>
</dbReference>
<dbReference type="EMBL" id="CP003415">
    <property type="protein sequence ID" value="AFI91032.1"/>
    <property type="molecule type" value="Genomic_DNA"/>
</dbReference>
<dbReference type="PIR" id="JU0328">
    <property type="entry name" value="JU0328"/>
</dbReference>
<dbReference type="RefSeq" id="WP_014700567.1">
    <property type="nucleotide sequence ID" value="NZ_WABS01000008.1"/>
</dbReference>
<dbReference type="SMR" id="P16630"/>
<dbReference type="STRING" id="1905730.W5S_2949"/>
<dbReference type="CAZy" id="GH12">
    <property type="family name" value="Glycoside Hydrolase Family 12"/>
</dbReference>
<dbReference type="KEGG" id="pec:W5S_2949"/>
<dbReference type="PATRIC" id="fig|1166016.3.peg.2995"/>
<dbReference type="eggNOG" id="COG5297">
    <property type="taxonomic scope" value="Bacteria"/>
</dbReference>
<dbReference type="HOGENOM" id="CLU_051064_1_2_6"/>
<dbReference type="Proteomes" id="UP000008044">
    <property type="component" value="Chromosome"/>
</dbReference>
<dbReference type="GO" id="GO:0008810">
    <property type="term" value="F:cellulase activity"/>
    <property type="evidence" value="ECO:0007669"/>
    <property type="project" value="UniProtKB-EC"/>
</dbReference>
<dbReference type="GO" id="GO:0030245">
    <property type="term" value="P:cellulose catabolic process"/>
    <property type="evidence" value="ECO:0007669"/>
    <property type="project" value="UniProtKB-KW"/>
</dbReference>
<dbReference type="Gene3D" id="2.60.120.180">
    <property type="match status" value="1"/>
</dbReference>
<dbReference type="InterPro" id="IPR013320">
    <property type="entry name" value="ConA-like_dom_sf"/>
</dbReference>
<dbReference type="InterPro" id="IPR013319">
    <property type="entry name" value="GH11/12"/>
</dbReference>
<dbReference type="InterPro" id="IPR002594">
    <property type="entry name" value="GH12"/>
</dbReference>
<dbReference type="PANTHER" id="PTHR34002">
    <property type="entry name" value="BLR1656 PROTEIN"/>
    <property type="match status" value="1"/>
</dbReference>
<dbReference type="PANTHER" id="PTHR34002:SF9">
    <property type="entry name" value="XYLOGLUCAN-SPECIFIC ENDO-BETA-1,4-GLUCANASE A"/>
    <property type="match status" value="1"/>
</dbReference>
<dbReference type="Pfam" id="PF01670">
    <property type="entry name" value="Glyco_hydro_12"/>
    <property type="match status" value="1"/>
</dbReference>
<dbReference type="SUPFAM" id="SSF49899">
    <property type="entry name" value="Concanavalin A-like lectins/glucanases"/>
    <property type="match status" value="1"/>
</dbReference>
<feature type="signal peptide">
    <location>
        <begin position="1"/>
        <end position="32"/>
    </location>
</feature>
<feature type="chain" id="PRO_0000008020" description="Endoglucanase S">
    <location>
        <begin position="33"/>
        <end position="264"/>
    </location>
</feature>
<protein>
    <recommendedName>
        <fullName>Endoglucanase S</fullName>
        <ecNumber>3.2.1.4</ecNumber>
    </recommendedName>
    <alternativeName>
        <fullName>Cellulase S</fullName>
    </alternativeName>
    <alternativeName>
        <fullName>Endo-1,4-beta-glucanase S</fullName>
    </alternativeName>
</protein>
<evidence type="ECO:0000305" key="1"/>
<comment type="catalytic activity">
    <reaction>
        <text>Endohydrolysis of (1-&gt;4)-beta-D-glucosidic linkages in cellulose, lichenin and cereal beta-D-glucans.</text>
        <dbReference type="EC" id="3.2.1.4"/>
    </reaction>
</comment>
<comment type="similarity">
    <text evidence="1">Belongs to the glycosyl hydrolase 12 (cellulase H) family.</text>
</comment>
<gene>
    <name type="primary">celS</name>
    <name type="ordered locus">W5S_2949</name>
</gene>
<sequence length="264" mass="29757">MQTVNTQPHRIFRVLLPAVFSSLLLSSLTVSAASSSNDADKLYFGNNKYYLFNNVWGKDEIKGWQQTIFYNSPISMGWNWHWPSSTHSVKAYPSLVSGWHWTAGYTENSGLPIQLSSNKSITSNVTYSIKATGTYNAAYDIWFHTTDKANWDSSPTDELMIWLNDTNAGPAGDYIETVFLGDSSWNVFKGWINADNGGGWNVFSFVHTSGTNSASLNIRHFTDYLVQTKQWMSDEKYISSVEFGTEIFGGDGQIDITEWRVDVK</sequence>